<reference key="1">
    <citation type="journal article" date="2007" name="J. Bacteriol.">
        <title>The genome sequence of avian pathogenic Escherichia coli strain O1:K1:H7 shares strong similarities with human extraintestinal pathogenic E. coli genomes.</title>
        <authorList>
            <person name="Johnson T.J."/>
            <person name="Kariyawasam S."/>
            <person name="Wannemuehler Y."/>
            <person name="Mangiamele P."/>
            <person name="Johnson S.J."/>
            <person name="Doetkott C."/>
            <person name="Skyberg J.A."/>
            <person name="Lynne A.M."/>
            <person name="Johnson J.R."/>
            <person name="Nolan L.K."/>
        </authorList>
    </citation>
    <scope>NUCLEOTIDE SEQUENCE [LARGE SCALE GENOMIC DNA]</scope>
</reference>
<proteinExistence type="inferred from homology"/>
<keyword id="KW-0143">Chaperone</keyword>
<keyword id="KW-0963">Cytoplasm</keyword>
<keyword id="KW-0238">DNA-binding</keyword>
<keyword id="KW-1185">Reference proteome</keyword>
<protein>
    <recommendedName>
        <fullName evidence="1">Curved DNA-binding protein</fullName>
    </recommendedName>
</protein>
<gene>
    <name evidence="1" type="primary">cbpA</name>
    <name type="ordered locus">Ecok1_09030</name>
    <name type="ORF">APECO1_93</name>
</gene>
<name>CBPA_ECOK1</name>
<comment type="function">
    <text evidence="1">DNA-binding protein that preferentially recognizes a curved DNA sequence. It is probably a functional analog of DnaJ; displays overlapping activities with DnaJ, but functions under different conditions, probably acting as a molecular chaperone in an adaptive response to environmental stresses other than heat shock. Lacks autonomous chaperone activity; binds native substrates and targets them for recognition by DnaK. Its activity is inhibited by the binding of CbpM.</text>
</comment>
<comment type="subcellular location">
    <subcellularLocation>
        <location evidence="1">Cytoplasm</location>
        <location evidence="1">Nucleoid</location>
    </subcellularLocation>
</comment>
<evidence type="ECO:0000255" key="1">
    <source>
        <dbReference type="HAMAP-Rule" id="MF_01154"/>
    </source>
</evidence>
<dbReference type="EMBL" id="CP000468">
    <property type="protein sequence ID" value="ABJ00397.1"/>
    <property type="molecule type" value="Genomic_DNA"/>
</dbReference>
<dbReference type="RefSeq" id="WP_000420625.1">
    <property type="nucleotide sequence ID" value="NZ_CADILS010000016.1"/>
</dbReference>
<dbReference type="BMRB" id="A1A9Q7"/>
<dbReference type="SMR" id="A1A9Q7"/>
<dbReference type="KEGG" id="ecv:APECO1_93"/>
<dbReference type="HOGENOM" id="CLU_017633_0_0_6"/>
<dbReference type="Proteomes" id="UP000008216">
    <property type="component" value="Chromosome"/>
</dbReference>
<dbReference type="GO" id="GO:0005737">
    <property type="term" value="C:cytoplasm"/>
    <property type="evidence" value="ECO:0007669"/>
    <property type="project" value="UniProtKB-UniRule"/>
</dbReference>
<dbReference type="GO" id="GO:0009295">
    <property type="term" value="C:nucleoid"/>
    <property type="evidence" value="ECO:0007669"/>
    <property type="project" value="UniProtKB-SubCell"/>
</dbReference>
<dbReference type="GO" id="GO:0003681">
    <property type="term" value="F:bent DNA binding"/>
    <property type="evidence" value="ECO:0007669"/>
    <property type="project" value="UniProtKB-UniRule"/>
</dbReference>
<dbReference type="GO" id="GO:0051082">
    <property type="term" value="F:unfolded protein binding"/>
    <property type="evidence" value="ECO:0007669"/>
    <property type="project" value="InterPro"/>
</dbReference>
<dbReference type="GO" id="GO:0051085">
    <property type="term" value="P:chaperone cofactor-dependent protein refolding"/>
    <property type="evidence" value="ECO:0007669"/>
    <property type="project" value="TreeGrafter"/>
</dbReference>
<dbReference type="GO" id="GO:0042026">
    <property type="term" value="P:protein refolding"/>
    <property type="evidence" value="ECO:0007669"/>
    <property type="project" value="TreeGrafter"/>
</dbReference>
<dbReference type="CDD" id="cd06257">
    <property type="entry name" value="DnaJ"/>
    <property type="match status" value="1"/>
</dbReference>
<dbReference type="CDD" id="cd10747">
    <property type="entry name" value="DnaJ_C"/>
    <property type="match status" value="1"/>
</dbReference>
<dbReference type="FunFam" id="1.10.287.110:FF:000013">
    <property type="entry name" value="Curved DNA-binding protein"/>
    <property type="match status" value="1"/>
</dbReference>
<dbReference type="FunFam" id="2.60.260.20:FF:000008">
    <property type="entry name" value="Curved DNA-binding protein"/>
    <property type="match status" value="1"/>
</dbReference>
<dbReference type="FunFam" id="2.60.260.20:FF:000013">
    <property type="entry name" value="DnaJ subfamily B member 11"/>
    <property type="match status" value="1"/>
</dbReference>
<dbReference type="Gene3D" id="1.10.287.110">
    <property type="entry name" value="DnaJ domain"/>
    <property type="match status" value="1"/>
</dbReference>
<dbReference type="Gene3D" id="1.20.5.460">
    <property type="entry name" value="Single helix bin"/>
    <property type="match status" value="1"/>
</dbReference>
<dbReference type="Gene3D" id="2.60.260.20">
    <property type="entry name" value="Urease metallochaperone UreE, N-terminal domain"/>
    <property type="match status" value="2"/>
</dbReference>
<dbReference type="HAMAP" id="MF_01154">
    <property type="entry name" value="CbpA"/>
    <property type="match status" value="1"/>
</dbReference>
<dbReference type="InterPro" id="IPR023859">
    <property type="entry name" value="DNA-bd_curved-DNA"/>
</dbReference>
<dbReference type="InterPro" id="IPR002939">
    <property type="entry name" value="DnaJ_C"/>
</dbReference>
<dbReference type="InterPro" id="IPR001623">
    <property type="entry name" value="DnaJ_domain"/>
</dbReference>
<dbReference type="InterPro" id="IPR018253">
    <property type="entry name" value="DnaJ_domain_CS"/>
</dbReference>
<dbReference type="InterPro" id="IPR008971">
    <property type="entry name" value="HSP40/DnaJ_pept-bd"/>
</dbReference>
<dbReference type="InterPro" id="IPR036869">
    <property type="entry name" value="J_dom_sf"/>
</dbReference>
<dbReference type="NCBIfam" id="NF007618">
    <property type="entry name" value="PRK10266.1"/>
    <property type="match status" value="1"/>
</dbReference>
<dbReference type="PANTHER" id="PTHR43096">
    <property type="entry name" value="DNAJ HOMOLOG 1, MITOCHONDRIAL-RELATED"/>
    <property type="match status" value="1"/>
</dbReference>
<dbReference type="PANTHER" id="PTHR43096:SF52">
    <property type="entry name" value="DNAJ HOMOLOG 1, MITOCHONDRIAL-RELATED"/>
    <property type="match status" value="1"/>
</dbReference>
<dbReference type="Pfam" id="PF00226">
    <property type="entry name" value="DnaJ"/>
    <property type="match status" value="1"/>
</dbReference>
<dbReference type="Pfam" id="PF01556">
    <property type="entry name" value="DnaJ_C"/>
    <property type="match status" value="1"/>
</dbReference>
<dbReference type="PRINTS" id="PR00625">
    <property type="entry name" value="JDOMAIN"/>
</dbReference>
<dbReference type="SMART" id="SM00271">
    <property type="entry name" value="DnaJ"/>
    <property type="match status" value="1"/>
</dbReference>
<dbReference type="SUPFAM" id="SSF46565">
    <property type="entry name" value="Chaperone J-domain"/>
    <property type="match status" value="1"/>
</dbReference>
<dbReference type="SUPFAM" id="SSF49493">
    <property type="entry name" value="HSP40/DnaJ peptide-binding domain"/>
    <property type="match status" value="2"/>
</dbReference>
<dbReference type="PROSITE" id="PS00636">
    <property type="entry name" value="DNAJ_1"/>
    <property type="match status" value="1"/>
</dbReference>
<dbReference type="PROSITE" id="PS50076">
    <property type="entry name" value="DNAJ_2"/>
    <property type="match status" value="1"/>
</dbReference>
<sequence>MELKDYYAIMGVKPTDDLKTIKTAYRRLARKYHPDVSKEPDAEARFKEVAEAWEVLSDEQRRAEYDQMWQHRNDPQFNRQFHHGDGQSFNAEDFDDIFSSIFGQHARQSRQRPATRGHDIEIEVAVFLEETLTEHKRTISYNLPVYNAFGMIEQEIPKTLNVKIPAGVGNGQRIRLKGQGTPGENGGPNGDLWLVIHIAPHPLFDIVGQDLEIVVPVSPWEAALGTKVTVPTLKESILLTIPPGSQAGQRLRVKGKGLVSKKQTGDLYAVLKIVMPPKPDENTAALWQQLADAQSSFDPRKDWGKA</sequence>
<feature type="chain" id="PRO_0000286880" description="Curved DNA-binding protein">
    <location>
        <begin position="1"/>
        <end position="306"/>
    </location>
</feature>
<feature type="domain" description="J" evidence="1">
    <location>
        <begin position="5"/>
        <end position="69"/>
    </location>
</feature>
<accession>A1A9Q7</accession>
<organism>
    <name type="scientific">Escherichia coli O1:K1 / APEC</name>
    <dbReference type="NCBI Taxonomy" id="405955"/>
    <lineage>
        <taxon>Bacteria</taxon>
        <taxon>Pseudomonadati</taxon>
        <taxon>Pseudomonadota</taxon>
        <taxon>Gammaproteobacteria</taxon>
        <taxon>Enterobacterales</taxon>
        <taxon>Enterobacteriaceae</taxon>
        <taxon>Escherichia</taxon>
    </lineage>
</organism>